<dbReference type="EC" id="5.4.2.11" evidence="1"/>
<dbReference type="EMBL" id="BX571965">
    <property type="protein sequence ID" value="CAH34431.1"/>
    <property type="molecule type" value="Genomic_DNA"/>
</dbReference>
<dbReference type="RefSeq" id="WP_004198007.1">
    <property type="nucleotide sequence ID" value="NZ_CP009538.1"/>
</dbReference>
<dbReference type="RefSeq" id="YP_107068.1">
    <property type="nucleotide sequence ID" value="NC_006350.1"/>
</dbReference>
<dbReference type="SMR" id="Q63XU7"/>
<dbReference type="STRING" id="272560.BPSL0443"/>
<dbReference type="GeneID" id="93058961"/>
<dbReference type="KEGG" id="bps:BPSL0443"/>
<dbReference type="PATRIC" id="fig|272560.51.peg.1215"/>
<dbReference type="eggNOG" id="COG0588">
    <property type="taxonomic scope" value="Bacteria"/>
</dbReference>
<dbReference type="UniPathway" id="UPA00109">
    <property type="reaction ID" value="UER00186"/>
</dbReference>
<dbReference type="Proteomes" id="UP000000605">
    <property type="component" value="Chromosome 1"/>
</dbReference>
<dbReference type="GO" id="GO:0004619">
    <property type="term" value="F:phosphoglycerate mutase activity"/>
    <property type="evidence" value="ECO:0007669"/>
    <property type="project" value="UniProtKB-EC"/>
</dbReference>
<dbReference type="GO" id="GO:0006094">
    <property type="term" value="P:gluconeogenesis"/>
    <property type="evidence" value="ECO:0007669"/>
    <property type="project" value="UniProtKB-UniRule"/>
</dbReference>
<dbReference type="GO" id="GO:0006096">
    <property type="term" value="P:glycolytic process"/>
    <property type="evidence" value="ECO:0007669"/>
    <property type="project" value="UniProtKB-UniRule"/>
</dbReference>
<dbReference type="CDD" id="cd07067">
    <property type="entry name" value="HP_PGM_like"/>
    <property type="match status" value="1"/>
</dbReference>
<dbReference type="FunFam" id="3.40.50.1240:FF:000003">
    <property type="entry name" value="2,3-bisphosphoglycerate-dependent phosphoglycerate mutase"/>
    <property type="match status" value="1"/>
</dbReference>
<dbReference type="Gene3D" id="3.40.50.1240">
    <property type="entry name" value="Phosphoglycerate mutase-like"/>
    <property type="match status" value="1"/>
</dbReference>
<dbReference type="HAMAP" id="MF_01039">
    <property type="entry name" value="PGAM_GpmA"/>
    <property type="match status" value="1"/>
</dbReference>
<dbReference type="InterPro" id="IPR013078">
    <property type="entry name" value="His_Pase_superF_clade-1"/>
</dbReference>
<dbReference type="InterPro" id="IPR029033">
    <property type="entry name" value="His_PPase_superfam"/>
</dbReference>
<dbReference type="InterPro" id="IPR001345">
    <property type="entry name" value="PG/BPGM_mutase_AS"/>
</dbReference>
<dbReference type="InterPro" id="IPR005952">
    <property type="entry name" value="Phosphogly_mut1"/>
</dbReference>
<dbReference type="NCBIfam" id="TIGR01258">
    <property type="entry name" value="pgm_1"/>
    <property type="match status" value="1"/>
</dbReference>
<dbReference type="NCBIfam" id="NF010713">
    <property type="entry name" value="PRK14115.1"/>
    <property type="match status" value="1"/>
</dbReference>
<dbReference type="PANTHER" id="PTHR11931">
    <property type="entry name" value="PHOSPHOGLYCERATE MUTASE"/>
    <property type="match status" value="1"/>
</dbReference>
<dbReference type="Pfam" id="PF00300">
    <property type="entry name" value="His_Phos_1"/>
    <property type="match status" value="2"/>
</dbReference>
<dbReference type="PIRSF" id="PIRSF000709">
    <property type="entry name" value="6PFK_2-Ptase"/>
    <property type="match status" value="1"/>
</dbReference>
<dbReference type="SMART" id="SM00855">
    <property type="entry name" value="PGAM"/>
    <property type="match status" value="1"/>
</dbReference>
<dbReference type="SUPFAM" id="SSF53254">
    <property type="entry name" value="Phosphoglycerate mutase-like"/>
    <property type="match status" value="1"/>
</dbReference>
<dbReference type="PROSITE" id="PS00175">
    <property type="entry name" value="PG_MUTASE"/>
    <property type="match status" value="1"/>
</dbReference>
<gene>
    <name evidence="1" type="primary">gpmA</name>
    <name type="ordered locus">BPSL0443</name>
</gene>
<sequence>MYKLVLIRHGESTWNKENRFTGWVDVDLTEQGNREARQAGQLLKEAGYTFDIAYTSVLKRAIRTLWHVQDQMDLMYVPVVHSWRLNERHYGALSGLNKAETAAKYGDEQVLVWRRSYDTPPPALEPGDERAPYADPRYAKVPREQLPLTECLKDTVARVLPLWNESIAPAVKAGKQVLIAAHGNSLRALIKYLDGISDADIVGLNIPNGVPLVYELDESLTPIRHYYLGDQEAIAKAQAAVAQQGKSAA</sequence>
<protein>
    <recommendedName>
        <fullName evidence="1">2,3-bisphosphoglycerate-dependent phosphoglycerate mutase</fullName>
        <shortName evidence="1">BPG-dependent PGAM</shortName>
        <shortName evidence="1">PGAM</shortName>
        <shortName evidence="1">Phosphoglyceromutase</shortName>
        <shortName evidence="1">dPGM</shortName>
        <ecNumber evidence="1">5.4.2.11</ecNumber>
    </recommendedName>
</protein>
<reference key="1">
    <citation type="journal article" date="2004" name="Proc. Natl. Acad. Sci. U.S.A.">
        <title>Genomic plasticity of the causative agent of melioidosis, Burkholderia pseudomallei.</title>
        <authorList>
            <person name="Holden M.T.G."/>
            <person name="Titball R.W."/>
            <person name="Peacock S.J."/>
            <person name="Cerdeno-Tarraga A.-M."/>
            <person name="Atkins T."/>
            <person name="Crossman L.C."/>
            <person name="Pitt T."/>
            <person name="Churcher C."/>
            <person name="Mungall K.L."/>
            <person name="Bentley S.D."/>
            <person name="Sebaihia M."/>
            <person name="Thomson N.R."/>
            <person name="Bason N."/>
            <person name="Beacham I.R."/>
            <person name="Brooks K."/>
            <person name="Brown K.A."/>
            <person name="Brown N.F."/>
            <person name="Challis G.L."/>
            <person name="Cherevach I."/>
            <person name="Chillingworth T."/>
            <person name="Cronin A."/>
            <person name="Crossett B."/>
            <person name="Davis P."/>
            <person name="DeShazer D."/>
            <person name="Feltwell T."/>
            <person name="Fraser A."/>
            <person name="Hance Z."/>
            <person name="Hauser H."/>
            <person name="Holroyd S."/>
            <person name="Jagels K."/>
            <person name="Keith K.E."/>
            <person name="Maddison M."/>
            <person name="Moule S."/>
            <person name="Price C."/>
            <person name="Quail M.A."/>
            <person name="Rabbinowitsch E."/>
            <person name="Rutherford K."/>
            <person name="Sanders M."/>
            <person name="Simmonds M."/>
            <person name="Songsivilai S."/>
            <person name="Stevens K."/>
            <person name="Tumapa S."/>
            <person name="Vesaratchavest M."/>
            <person name="Whitehead S."/>
            <person name="Yeats C."/>
            <person name="Barrell B.G."/>
            <person name="Oyston P.C.F."/>
            <person name="Parkhill J."/>
        </authorList>
    </citation>
    <scope>NUCLEOTIDE SEQUENCE [LARGE SCALE GENOMIC DNA]</scope>
    <source>
        <strain>K96243</strain>
    </source>
</reference>
<proteinExistence type="inferred from homology"/>
<feature type="chain" id="PRO_0000229112" description="2,3-bisphosphoglycerate-dependent phosphoglycerate mutase">
    <location>
        <begin position="1"/>
        <end position="249"/>
    </location>
</feature>
<feature type="active site" description="Tele-phosphohistidine intermediate" evidence="1">
    <location>
        <position position="9"/>
    </location>
</feature>
<feature type="active site" description="Proton donor/acceptor" evidence="1">
    <location>
        <position position="87"/>
    </location>
</feature>
<feature type="binding site" evidence="1">
    <location>
        <begin position="8"/>
        <end position="15"/>
    </location>
    <ligand>
        <name>substrate</name>
    </ligand>
</feature>
<feature type="binding site" evidence="1">
    <location>
        <begin position="21"/>
        <end position="22"/>
    </location>
    <ligand>
        <name>substrate</name>
    </ligand>
</feature>
<feature type="binding site" evidence="1">
    <location>
        <position position="60"/>
    </location>
    <ligand>
        <name>substrate</name>
    </ligand>
</feature>
<feature type="binding site" evidence="1">
    <location>
        <begin position="87"/>
        <end position="90"/>
    </location>
    <ligand>
        <name>substrate</name>
    </ligand>
</feature>
<feature type="binding site" evidence="1">
    <location>
        <position position="98"/>
    </location>
    <ligand>
        <name>substrate</name>
    </ligand>
</feature>
<feature type="binding site" evidence="1">
    <location>
        <begin position="114"/>
        <end position="115"/>
    </location>
    <ligand>
        <name>substrate</name>
    </ligand>
</feature>
<feature type="binding site" evidence="1">
    <location>
        <begin position="183"/>
        <end position="184"/>
    </location>
    <ligand>
        <name>substrate</name>
    </ligand>
</feature>
<feature type="site" description="Transition state stabilizer" evidence="1">
    <location>
        <position position="182"/>
    </location>
</feature>
<name>GPMA_BURPS</name>
<organism>
    <name type="scientific">Burkholderia pseudomallei (strain K96243)</name>
    <dbReference type="NCBI Taxonomy" id="272560"/>
    <lineage>
        <taxon>Bacteria</taxon>
        <taxon>Pseudomonadati</taxon>
        <taxon>Pseudomonadota</taxon>
        <taxon>Betaproteobacteria</taxon>
        <taxon>Burkholderiales</taxon>
        <taxon>Burkholderiaceae</taxon>
        <taxon>Burkholderia</taxon>
        <taxon>pseudomallei group</taxon>
    </lineage>
</organism>
<comment type="function">
    <text evidence="1">Catalyzes the interconversion of 2-phosphoglycerate and 3-phosphoglycerate.</text>
</comment>
<comment type="catalytic activity">
    <reaction evidence="1">
        <text>(2R)-2-phosphoglycerate = (2R)-3-phosphoglycerate</text>
        <dbReference type="Rhea" id="RHEA:15901"/>
        <dbReference type="ChEBI" id="CHEBI:58272"/>
        <dbReference type="ChEBI" id="CHEBI:58289"/>
        <dbReference type="EC" id="5.4.2.11"/>
    </reaction>
</comment>
<comment type="pathway">
    <text evidence="1">Carbohydrate degradation; glycolysis; pyruvate from D-glyceraldehyde 3-phosphate: step 3/5.</text>
</comment>
<comment type="subunit">
    <text evidence="1">Homodimer.</text>
</comment>
<comment type="similarity">
    <text evidence="1">Belongs to the phosphoglycerate mutase family. BPG-dependent PGAM subfamily.</text>
</comment>
<accession>Q63XU7</accession>
<keyword id="KW-0312">Gluconeogenesis</keyword>
<keyword id="KW-0324">Glycolysis</keyword>
<keyword id="KW-0413">Isomerase</keyword>
<keyword id="KW-1185">Reference proteome</keyword>
<evidence type="ECO:0000255" key="1">
    <source>
        <dbReference type="HAMAP-Rule" id="MF_01039"/>
    </source>
</evidence>